<sequence>MPLKVVFMGTPDFAVPTLAEIVGSGHEVVAVYTRAPAPAGRGMALRPSPVQALAERFGLPVRTPATLRSEEAVEIFRGHDADVAVVVAYGMILPPAILDAPRLGCLNLHASILPRWRGAAPIQRAVMAGDSETGVAVMRMEPGLDTGPVAMLERVAITPEMTAGELHDRLMPLGADLMNRALGALERGGLTFTPQAAEGIVYAHKITNEEARLDWAEPAQRLHDTIRGLSPFPGAFFMADLGRGPERVKVLRASLADGRAEPGTLLDAHGTVACGEGAIRLLRVQPAGKGPMEAGDFLRGRRLEPGARLA</sequence>
<keyword id="KW-0648">Protein biosynthesis</keyword>
<keyword id="KW-1185">Reference proteome</keyword>
<keyword id="KW-0808">Transferase</keyword>
<protein>
    <recommendedName>
        <fullName evidence="1">Methionyl-tRNA formyltransferase</fullName>
        <ecNumber evidence="1">2.1.2.9</ecNumber>
    </recommendedName>
</protein>
<name>FMT_METNO</name>
<accession>B8IFQ3</accession>
<feature type="chain" id="PRO_1000190031" description="Methionyl-tRNA formyltransferase">
    <location>
        <begin position="1"/>
        <end position="310"/>
    </location>
</feature>
<feature type="binding site" evidence="1">
    <location>
        <begin position="111"/>
        <end position="114"/>
    </location>
    <ligand>
        <name>(6S)-5,6,7,8-tetrahydrofolate</name>
        <dbReference type="ChEBI" id="CHEBI:57453"/>
    </ligand>
</feature>
<comment type="function">
    <text evidence="1">Attaches a formyl group to the free amino group of methionyl-tRNA(fMet). The formyl group appears to play a dual role in the initiator identity of N-formylmethionyl-tRNA by promoting its recognition by IF2 and preventing the misappropriation of this tRNA by the elongation apparatus.</text>
</comment>
<comment type="catalytic activity">
    <reaction evidence="1">
        <text>L-methionyl-tRNA(fMet) + (6R)-10-formyltetrahydrofolate = N-formyl-L-methionyl-tRNA(fMet) + (6S)-5,6,7,8-tetrahydrofolate + H(+)</text>
        <dbReference type="Rhea" id="RHEA:24380"/>
        <dbReference type="Rhea" id="RHEA-COMP:9952"/>
        <dbReference type="Rhea" id="RHEA-COMP:9953"/>
        <dbReference type="ChEBI" id="CHEBI:15378"/>
        <dbReference type="ChEBI" id="CHEBI:57453"/>
        <dbReference type="ChEBI" id="CHEBI:78530"/>
        <dbReference type="ChEBI" id="CHEBI:78844"/>
        <dbReference type="ChEBI" id="CHEBI:195366"/>
        <dbReference type="EC" id="2.1.2.9"/>
    </reaction>
</comment>
<comment type="similarity">
    <text evidence="1">Belongs to the Fmt family.</text>
</comment>
<evidence type="ECO:0000255" key="1">
    <source>
        <dbReference type="HAMAP-Rule" id="MF_00182"/>
    </source>
</evidence>
<reference key="1">
    <citation type="submission" date="2009-01" db="EMBL/GenBank/DDBJ databases">
        <title>Complete sequence of chromosome of Methylobacterium nodulans ORS 2060.</title>
        <authorList>
            <consortium name="US DOE Joint Genome Institute"/>
            <person name="Lucas S."/>
            <person name="Copeland A."/>
            <person name="Lapidus A."/>
            <person name="Glavina del Rio T."/>
            <person name="Dalin E."/>
            <person name="Tice H."/>
            <person name="Bruce D."/>
            <person name="Goodwin L."/>
            <person name="Pitluck S."/>
            <person name="Sims D."/>
            <person name="Brettin T."/>
            <person name="Detter J.C."/>
            <person name="Han C."/>
            <person name="Larimer F."/>
            <person name="Land M."/>
            <person name="Hauser L."/>
            <person name="Kyrpides N."/>
            <person name="Ivanova N."/>
            <person name="Marx C.J."/>
            <person name="Richardson P."/>
        </authorList>
    </citation>
    <scope>NUCLEOTIDE SEQUENCE [LARGE SCALE GENOMIC DNA]</scope>
    <source>
        <strain>LMG 21967 / CNCM I-2342 / ORS 2060</strain>
    </source>
</reference>
<organism>
    <name type="scientific">Methylobacterium nodulans (strain LMG 21967 / CNCM I-2342 / ORS 2060)</name>
    <dbReference type="NCBI Taxonomy" id="460265"/>
    <lineage>
        <taxon>Bacteria</taxon>
        <taxon>Pseudomonadati</taxon>
        <taxon>Pseudomonadota</taxon>
        <taxon>Alphaproteobacteria</taxon>
        <taxon>Hyphomicrobiales</taxon>
        <taxon>Methylobacteriaceae</taxon>
        <taxon>Methylobacterium</taxon>
    </lineage>
</organism>
<dbReference type="EC" id="2.1.2.9" evidence="1"/>
<dbReference type="EMBL" id="CP001349">
    <property type="protein sequence ID" value="ACL59613.1"/>
    <property type="molecule type" value="Genomic_DNA"/>
</dbReference>
<dbReference type="RefSeq" id="WP_015931247.1">
    <property type="nucleotide sequence ID" value="NC_011894.1"/>
</dbReference>
<dbReference type="SMR" id="B8IFQ3"/>
<dbReference type="STRING" id="460265.Mnod_4748"/>
<dbReference type="KEGG" id="mno:Mnod_4748"/>
<dbReference type="eggNOG" id="COG0223">
    <property type="taxonomic scope" value="Bacteria"/>
</dbReference>
<dbReference type="HOGENOM" id="CLU_033347_1_2_5"/>
<dbReference type="OrthoDB" id="9802815at2"/>
<dbReference type="Proteomes" id="UP000008207">
    <property type="component" value="Chromosome"/>
</dbReference>
<dbReference type="GO" id="GO:0005829">
    <property type="term" value="C:cytosol"/>
    <property type="evidence" value="ECO:0007669"/>
    <property type="project" value="TreeGrafter"/>
</dbReference>
<dbReference type="GO" id="GO:0004479">
    <property type="term" value="F:methionyl-tRNA formyltransferase activity"/>
    <property type="evidence" value="ECO:0007669"/>
    <property type="project" value="UniProtKB-UniRule"/>
</dbReference>
<dbReference type="CDD" id="cd08646">
    <property type="entry name" value="FMT_core_Met-tRNA-FMT_N"/>
    <property type="match status" value="1"/>
</dbReference>
<dbReference type="CDD" id="cd08704">
    <property type="entry name" value="Met_tRNA_FMT_C"/>
    <property type="match status" value="1"/>
</dbReference>
<dbReference type="Gene3D" id="3.10.25.10">
    <property type="entry name" value="Formyl transferase, C-terminal domain"/>
    <property type="match status" value="1"/>
</dbReference>
<dbReference type="Gene3D" id="3.40.50.170">
    <property type="entry name" value="Formyl transferase, N-terminal domain"/>
    <property type="match status" value="1"/>
</dbReference>
<dbReference type="HAMAP" id="MF_00182">
    <property type="entry name" value="Formyl_trans"/>
    <property type="match status" value="1"/>
</dbReference>
<dbReference type="InterPro" id="IPR005794">
    <property type="entry name" value="Fmt"/>
</dbReference>
<dbReference type="InterPro" id="IPR005793">
    <property type="entry name" value="Formyl_trans_C"/>
</dbReference>
<dbReference type="InterPro" id="IPR037022">
    <property type="entry name" value="Formyl_trans_C_sf"/>
</dbReference>
<dbReference type="InterPro" id="IPR002376">
    <property type="entry name" value="Formyl_transf_N"/>
</dbReference>
<dbReference type="InterPro" id="IPR036477">
    <property type="entry name" value="Formyl_transf_N_sf"/>
</dbReference>
<dbReference type="InterPro" id="IPR011034">
    <property type="entry name" value="Formyl_transferase-like_C_sf"/>
</dbReference>
<dbReference type="InterPro" id="IPR044135">
    <property type="entry name" value="Met-tRNA-FMT_C"/>
</dbReference>
<dbReference type="InterPro" id="IPR041711">
    <property type="entry name" value="Met-tRNA-FMT_N"/>
</dbReference>
<dbReference type="NCBIfam" id="TIGR00460">
    <property type="entry name" value="fmt"/>
    <property type="match status" value="1"/>
</dbReference>
<dbReference type="PANTHER" id="PTHR11138">
    <property type="entry name" value="METHIONYL-TRNA FORMYLTRANSFERASE"/>
    <property type="match status" value="1"/>
</dbReference>
<dbReference type="PANTHER" id="PTHR11138:SF5">
    <property type="entry name" value="METHIONYL-TRNA FORMYLTRANSFERASE, MITOCHONDRIAL"/>
    <property type="match status" value="1"/>
</dbReference>
<dbReference type="Pfam" id="PF02911">
    <property type="entry name" value="Formyl_trans_C"/>
    <property type="match status" value="1"/>
</dbReference>
<dbReference type="Pfam" id="PF00551">
    <property type="entry name" value="Formyl_trans_N"/>
    <property type="match status" value="1"/>
</dbReference>
<dbReference type="SUPFAM" id="SSF50486">
    <property type="entry name" value="FMT C-terminal domain-like"/>
    <property type="match status" value="1"/>
</dbReference>
<dbReference type="SUPFAM" id="SSF53328">
    <property type="entry name" value="Formyltransferase"/>
    <property type="match status" value="1"/>
</dbReference>
<gene>
    <name evidence="1" type="primary">fmt</name>
    <name type="ordered locus">Mnod_4748</name>
</gene>
<proteinExistence type="inferred from homology"/>